<accession>P0CQ63</accession>
<accession>Q55N50</accession>
<accession>Q5KBI0</accession>
<dbReference type="EC" id="2.3.2.27" evidence="1"/>
<dbReference type="EMBL" id="AAEY01000042">
    <property type="protein sequence ID" value="EAL19135.1"/>
    <property type="molecule type" value="Genomic_DNA"/>
</dbReference>
<dbReference type="RefSeq" id="XP_773782.1">
    <property type="nucleotide sequence ID" value="XM_768689.1"/>
</dbReference>
<dbReference type="SMR" id="P0CQ63"/>
<dbReference type="GeneID" id="4937757"/>
<dbReference type="KEGG" id="cnb:CNBH2340"/>
<dbReference type="VEuPathDB" id="FungiDB:CNBH2340"/>
<dbReference type="HOGENOM" id="CLU_019713_0_0_1"/>
<dbReference type="OrthoDB" id="7884at5206"/>
<dbReference type="UniPathway" id="UPA00143"/>
<dbReference type="GO" id="GO:0033503">
    <property type="term" value="C:HULC complex"/>
    <property type="evidence" value="ECO:0007669"/>
    <property type="project" value="TreeGrafter"/>
</dbReference>
<dbReference type="GO" id="GO:0005634">
    <property type="term" value="C:nucleus"/>
    <property type="evidence" value="ECO:0007669"/>
    <property type="project" value="UniProtKB-SubCell"/>
</dbReference>
<dbReference type="GO" id="GO:0061630">
    <property type="term" value="F:ubiquitin protein ligase activity"/>
    <property type="evidence" value="ECO:0007669"/>
    <property type="project" value="TreeGrafter"/>
</dbReference>
<dbReference type="GO" id="GO:0008270">
    <property type="term" value="F:zinc ion binding"/>
    <property type="evidence" value="ECO:0007669"/>
    <property type="project" value="UniProtKB-KW"/>
</dbReference>
<dbReference type="GO" id="GO:0006325">
    <property type="term" value="P:chromatin organization"/>
    <property type="evidence" value="ECO:0007669"/>
    <property type="project" value="UniProtKB-KW"/>
</dbReference>
<dbReference type="GO" id="GO:0016567">
    <property type="term" value="P:protein ubiquitination"/>
    <property type="evidence" value="ECO:0007669"/>
    <property type="project" value="UniProtKB-UniPathway"/>
</dbReference>
<dbReference type="CDD" id="cd16499">
    <property type="entry name" value="RING-HC_Bre1-like"/>
    <property type="match status" value="1"/>
</dbReference>
<dbReference type="Gene3D" id="1.10.287.1490">
    <property type="match status" value="1"/>
</dbReference>
<dbReference type="Gene3D" id="3.30.40.10">
    <property type="entry name" value="Zinc/RING finger domain, C3HC4 (zinc finger)"/>
    <property type="match status" value="1"/>
</dbReference>
<dbReference type="InterPro" id="IPR013956">
    <property type="entry name" value="E3_ubiquit_lig_Bre1"/>
</dbReference>
<dbReference type="InterPro" id="IPR018957">
    <property type="entry name" value="Znf_C3HC4_RING-type"/>
</dbReference>
<dbReference type="InterPro" id="IPR001841">
    <property type="entry name" value="Znf_RING"/>
</dbReference>
<dbReference type="InterPro" id="IPR013083">
    <property type="entry name" value="Znf_RING/FYVE/PHD"/>
</dbReference>
<dbReference type="InterPro" id="IPR017907">
    <property type="entry name" value="Znf_RING_CS"/>
</dbReference>
<dbReference type="PANTHER" id="PTHR23163:SF0">
    <property type="entry name" value="E3 UBIQUITIN-PROTEIN LIGASE BRE1"/>
    <property type="match status" value="1"/>
</dbReference>
<dbReference type="PANTHER" id="PTHR23163">
    <property type="entry name" value="RING FINGER PROTEIN-RELATED"/>
    <property type="match status" value="1"/>
</dbReference>
<dbReference type="Pfam" id="PF08647">
    <property type="entry name" value="BRE1"/>
    <property type="match status" value="1"/>
</dbReference>
<dbReference type="Pfam" id="PF00097">
    <property type="entry name" value="zf-C3HC4"/>
    <property type="match status" value="1"/>
</dbReference>
<dbReference type="SUPFAM" id="SSF57850">
    <property type="entry name" value="RING/U-box"/>
    <property type="match status" value="1"/>
</dbReference>
<dbReference type="PROSITE" id="PS00518">
    <property type="entry name" value="ZF_RING_1"/>
    <property type="match status" value="1"/>
</dbReference>
<dbReference type="PROSITE" id="PS50089">
    <property type="entry name" value="ZF_RING_2"/>
    <property type="match status" value="1"/>
</dbReference>
<reference key="1">
    <citation type="journal article" date="2005" name="Science">
        <title>The genome of the basidiomycetous yeast and human pathogen Cryptococcus neoformans.</title>
        <authorList>
            <person name="Loftus B.J."/>
            <person name="Fung E."/>
            <person name="Roncaglia P."/>
            <person name="Rowley D."/>
            <person name="Amedeo P."/>
            <person name="Bruno D."/>
            <person name="Vamathevan J."/>
            <person name="Miranda M."/>
            <person name="Anderson I.J."/>
            <person name="Fraser J.A."/>
            <person name="Allen J.E."/>
            <person name="Bosdet I.E."/>
            <person name="Brent M.R."/>
            <person name="Chiu R."/>
            <person name="Doering T.L."/>
            <person name="Donlin M.J."/>
            <person name="D'Souza C.A."/>
            <person name="Fox D.S."/>
            <person name="Grinberg V."/>
            <person name="Fu J."/>
            <person name="Fukushima M."/>
            <person name="Haas B.J."/>
            <person name="Huang J.C."/>
            <person name="Janbon G."/>
            <person name="Jones S.J.M."/>
            <person name="Koo H.L."/>
            <person name="Krzywinski M.I."/>
            <person name="Kwon-Chung K.J."/>
            <person name="Lengeler K.B."/>
            <person name="Maiti R."/>
            <person name="Marra M.A."/>
            <person name="Marra R.E."/>
            <person name="Mathewson C.A."/>
            <person name="Mitchell T.G."/>
            <person name="Pertea M."/>
            <person name="Riggs F.R."/>
            <person name="Salzberg S.L."/>
            <person name="Schein J.E."/>
            <person name="Shvartsbeyn A."/>
            <person name="Shin H."/>
            <person name="Shumway M."/>
            <person name="Specht C.A."/>
            <person name="Suh B.B."/>
            <person name="Tenney A."/>
            <person name="Utterback T.R."/>
            <person name="Wickes B.L."/>
            <person name="Wortman J.R."/>
            <person name="Wye N.H."/>
            <person name="Kronstad J.W."/>
            <person name="Lodge J.K."/>
            <person name="Heitman J."/>
            <person name="Davis R.W."/>
            <person name="Fraser C.M."/>
            <person name="Hyman R.W."/>
        </authorList>
    </citation>
    <scope>NUCLEOTIDE SEQUENCE [LARGE SCALE GENOMIC DNA]</scope>
    <source>
        <strain>B-3501A</strain>
    </source>
</reference>
<sequence length="820" mass="92867">MNADLKRVRENTLDDSPSPSAKRRLNSNASSPIQPSDDEGMAEWMKIVEVKRKEAIYRQMLEYRRISEHETKRANDLEAQRRVLEASFHAVELCWTQIVAAVRDLAGAENLQLKEEEVLEPLLDPSTPVPELEKALRSRLPTTRQLVTRFVDLVAHNATRPASEADLQARCLKLEAEASALRSNSKLLESEISALKGSRDEAQRDLQRIRKALDRERMEHGKAQEEWKEERTRGGQATPNLRANGSGHSTPNGKVEADKKFYSGAGPSMAGVLQDTSELEQLAASRLKQLEQLRFEQTQLQQEVDRLKILANHPSETALRESPFFQVYLHQLSTSINRAESLQTRFTATESKLDQLRDSNGEFREAVLAEARGQTETLRAQMAKKDSDIARLRGQRDELNSEIMERRAKEVEKCKYTEQIENLANSRQERISFLTSEVRRLKGKLAAAHSSDGYLSFLKESGIDGDYVKDLEAKVVTSQDQINALTSQLERVSSDTAAAKSETEVRTELESAKRLLARYERILGPNPEAAEDVRYLSQQLEKKEKERASLEMKLEEAEAATNALYSEVEGLSKLWEALDQTVKSKVLELRDGEQKITRLATEKAKADNKYFAAMRAKEAVDMEAKAAQRSVEKQLRLLERAQEVETSLRSQITANEKGLTALKNNALDLQNQLATVVAEKTQLELRLQQSQNALVEAQQIMHQRVAEAIAEKEARAKLQDEADGQMKIIKKLKERQDAVAAASQTGMSDHEWAITQERDKLLKLLKCSCCEQNFKQQVIVKCMHTFCKQCLEQRIASRQRKCPACGLAFAKEDIQTLYWQ</sequence>
<evidence type="ECO:0000250" key="1">
    <source>
        <dbReference type="UniProtKB" id="Q07457"/>
    </source>
</evidence>
<evidence type="ECO:0000255" key="2"/>
<evidence type="ECO:0000255" key="3">
    <source>
        <dbReference type="PROSITE-ProRule" id="PRU00175"/>
    </source>
</evidence>
<evidence type="ECO:0000256" key="4">
    <source>
        <dbReference type="SAM" id="MobiDB-lite"/>
    </source>
</evidence>
<evidence type="ECO:0000305" key="5"/>
<feature type="chain" id="PRO_0000410242" description="E3 ubiquitin-protein ligase BRE1">
    <location>
        <begin position="1"/>
        <end position="820"/>
    </location>
</feature>
<feature type="zinc finger region" description="RING-type" evidence="3">
    <location>
        <begin position="767"/>
        <end position="806"/>
    </location>
</feature>
<feature type="region of interest" description="Disordered" evidence="4">
    <location>
        <begin position="1"/>
        <end position="38"/>
    </location>
</feature>
<feature type="region of interest" description="Disordered" evidence="4">
    <location>
        <begin position="213"/>
        <end position="254"/>
    </location>
</feature>
<feature type="coiled-coil region" evidence="2">
    <location>
        <begin position="68"/>
        <end position="92"/>
    </location>
</feature>
<feature type="coiled-coil region" evidence="2">
    <location>
        <begin position="164"/>
        <end position="226"/>
    </location>
</feature>
<feature type="coiled-coil region" evidence="2">
    <location>
        <begin position="287"/>
        <end position="738"/>
    </location>
</feature>
<feature type="compositionally biased region" description="Basic and acidic residues" evidence="4">
    <location>
        <begin position="1"/>
        <end position="12"/>
    </location>
</feature>
<feature type="compositionally biased region" description="Basic and acidic residues" evidence="4">
    <location>
        <begin position="213"/>
        <end position="233"/>
    </location>
</feature>
<feature type="compositionally biased region" description="Polar residues" evidence="4">
    <location>
        <begin position="235"/>
        <end position="252"/>
    </location>
</feature>
<keyword id="KW-0156">Chromatin regulator</keyword>
<keyword id="KW-0175">Coiled coil</keyword>
<keyword id="KW-0479">Metal-binding</keyword>
<keyword id="KW-0539">Nucleus</keyword>
<keyword id="KW-0808">Transferase</keyword>
<keyword id="KW-0833">Ubl conjugation pathway</keyword>
<keyword id="KW-0862">Zinc</keyword>
<keyword id="KW-0863">Zinc-finger</keyword>
<proteinExistence type="inferred from homology"/>
<name>BRE1_CRYNB</name>
<comment type="function">
    <text evidence="1">E3 ubiquitin-protein ligase that mediates monoubiquitination of histone H2B to form H2BK123ub1. H2BK123ub1 gives a specific tag for epigenetic transcriptional activation and is also a prerequisite for H3K4me and H3K79me formation.</text>
</comment>
<comment type="catalytic activity">
    <reaction evidence="1">
        <text>S-ubiquitinyl-[E2 ubiquitin-conjugating enzyme]-L-cysteine + [acceptor protein]-L-lysine = [E2 ubiquitin-conjugating enzyme]-L-cysteine + N(6)-ubiquitinyl-[acceptor protein]-L-lysine.</text>
        <dbReference type="EC" id="2.3.2.27"/>
    </reaction>
</comment>
<comment type="pathway">
    <text>Protein modification; protein ubiquitination.</text>
</comment>
<comment type="subcellular location">
    <subcellularLocation>
        <location evidence="1">Nucleus</location>
    </subcellularLocation>
</comment>
<comment type="similarity">
    <text evidence="5">Belongs to the BRE1 family.</text>
</comment>
<protein>
    <recommendedName>
        <fullName>E3 ubiquitin-protein ligase BRE1</fullName>
        <ecNumber evidence="1">2.3.2.27</ecNumber>
    </recommendedName>
    <alternativeName>
        <fullName evidence="5">RING-type E3 ubiquitin transferase BRE1</fullName>
    </alternativeName>
</protein>
<organism>
    <name type="scientific">Cryptococcus neoformans var. neoformans serotype D (strain B-3501A)</name>
    <name type="common">Filobasidiella neoformans</name>
    <dbReference type="NCBI Taxonomy" id="283643"/>
    <lineage>
        <taxon>Eukaryota</taxon>
        <taxon>Fungi</taxon>
        <taxon>Dikarya</taxon>
        <taxon>Basidiomycota</taxon>
        <taxon>Agaricomycotina</taxon>
        <taxon>Tremellomycetes</taxon>
        <taxon>Tremellales</taxon>
        <taxon>Cryptococcaceae</taxon>
        <taxon>Cryptococcus</taxon>
        <taxon>Cryptococcus neoformans species complex</taxon>
    </lineage>
</organism>
<gene>
    <name type="primary">BRE1</name>
    <name type="ordered locus">CNBH2340</name>
</gene>